<feature type="chain" id="PRO_0000334056" description="Cell division protein SepF">
    <location>
        <begin position="1"/>
        <end position="189"/>
    </location>
</feature>
<feature type="region of interest" description="Disordered" evidence="2">
    <location>
        <begin position="152"/>
        <end position="189"/>
    </location>
</feature>
<feature type="compositionally biased region" description="Polar residues" evidence="2">
    <location>
        <begin position="152"/>
        <end position="163"/>
    </location>
</feature>
<accession>Q7VDI4</accession>
<comment type="function">
    <text evidence="1">Cell division protein that is part of the divisome complex and is recruited early to the Z-ring. Probably stimulates Z-ring formation, perhaps through the cross-linking of FtsZ protofilaments. Its function overlaps with FtsA.</text>
</comment>
<comment type="subunit">
    <text evidence="1">Homodimer. Interacts with FtsZ.</text>
</comment>
<comment type="subcellular location">
    <subcellularLocation>
        <location evidence="1">Cytoplasm</location>
    </subcellularLocation>
    <text evidence="1">Localizes to the division site, in a FtsZ-dependent manner.</text>
</comment>
<comment type="similarity">
    <text evidence="1">Belongs to the SepF family.</text>
</comment>
<sequence length="189" mass="20017">MSLISRLRAVVAGDDYLDGDFDELDYETGDDFDTGNDGGGNYSSGLAALSNANPFNNRGGSSKVIGMPGISTAAAEVSLMEPRSFDEMPKAIQALRERKTVILNLTMMEPDQAQRAVDFVAGGTFAIDGHQERVGESIFLFAPSCVTVTNSFQEEPSPSSVMNKDNEGPVSESVMAPEPAWGASVPSAI</sequence>
<keyword id="KW-0131">Cell cycle</keyword>
<keyword id="KW-0132">Cell division</keyword>
<keyword id="KW-0963">Cytoplasm</keyword>
<keyword id="KW-1185">Reference proteome</keyword>
<keyword id="KW-0717">Septation</keyword>
<evidence type="ECO:0000255" key="1">
    <source>
        <dbReference type="HAMAP-Rule" id="MF_01197"/>
    </source>
</evidence>
<evidence type="ECO:0000256" key="2">
    <source>
        <dbReference type="SAM" id="MobiDB-lite"/>
    </source>
</evidence>
<organism>
    <name type="scientific">Prochlorococcus marinus (strain SARG / CCMP1375 / SS120)</name>
    <dbReference type="NCBI Taxonomy" id="167539"/>
    <lineage>
        <taxon>Bacteria</taxon>
        <taxon>Bacillati</taxon>
        <taxon>Cyanobacteriota</taxon>
        <taxon>Cyanophyceae</taxon>
        <taxon>Synechococcales</taxon>
        <taxon>Prochlorococcaceae</taxon>
        <taxon>Prochlorococcus</taxon>
    </lineage>
</organism>
<gene>
    <name evidence="1" type="primary">sepF</name>
    <name type="ordered locus">Pro_0392</name>
</gene>
<proteinExistence type="inferred from homology"/>
<protein>
    <recommendedName>
        <fullName evidence="1">Cell division protein SepF</fullName>
    </recommendedName>
</protein>
<dbReference type="EMBL" id="AE017126">
    <property type="protein sequence ID" value="AAP99438.1"/>
    <property type="molecule type" value="Genomic_DNA"/>
</dbReference>
<dbReference type="RefSeq" id="NP_874786.1">
    <property type="nucleotide sequence ID" value="NC_005042.1"/>
</dbReference>
<dbReference type="RefSeq" id="WP_011124547.1">
    <property type="nucleotide sequence ID" value="NC_005042.1"/>
</dbReference>
<dbReference type="SMR" id="Q7VDI4"/>
<dbReference type="STRING" id="167539.Pro_0392"/>
<dbReference type="EnsemblBacteria" id="AAP99438">
    <property type="protein sequence ID" value="AAP99438"/>
    <property type="gene ID" value="Pro_0392"/>
</dbReference>
<dbReference type="KEGG" id="pma:Pro_0392"/>
<dbReference type="PATRIC" id="fig|167539.5.peg.400"/>
<dbReference type="eggNOG" id="COG1799">
    <property type="taxonomic scope" value="Bacteria"/>
</dbReference>
<dbReference type="HOGENOM" id="CLU_078499_1_0_3"/>
<dbReference type="OrthoDB" id="9815206at2"/>
<dbReference type="Proteomes" id="UP000001420">
    <property type="component" value="Chromosome"/>
</dbReference>
<dbReference type="GO" id="GO:0005737">
    <property type="term" value="C:cytoplasm"/>
    <property type="evidence" value="ECO:0007669"/>
    <property type="project" value="UniProtKB-SubCell"/>
</dbReference>
<dbReference type="GO" id="GO:0000917">
    <property type="term" value="P:division septum assembly"/>
    <property type="evidence" value="ECO:0007669"/>
    <property type="project" value="UniProtKB-KW"/>
</dbReference>
<dbReference type="GO" id="GO:0043093">
    <property type="term" value="P:FtsZ-dependent cytokinesis"/>
    <property type="evidence" value="ECO:0007669"/>
    <property type="project" value="UniProtKB-UniRule"/>
</dbReference>
<dbReference type="Gene3D" id="3.30.110.150">
    <property type="entry name" value="SepF-like protein"/>
    <property type="match status" value="1"/>
</dbReference>
<dbReference type="HAMAP" id="MF_01197">
    <property type="entry name" value="SepF"/>
    <property type="match status" value="1"/>
</dbReference>
<dbReference type="InterPro" id="IPR023052">
    <property type="entry name" value="Cell_div_SepF"/>
</dbReference>
<dbReference type="InterPro" id="IPR007561">
    <property type="entry name" value="Cell_div_SepF/SepF-rel"/>
</dbReference>
<dbReference type="InterPro" id="IPR038594">
    <property type="entry name" value="SepF-like_sf"/>
</dbReference>
<dbReference type="PANTHER" id="PTHR35798">
    <property type="entry name" value="CELL DIVISION PROTEIN SEPF"/>
    <property type="match status" value="1"/>
</dbReference>
<dbReference type="PANTHER" id="PTHR35798:SF1">
    <property type="entry name" value="CELL DIVISION PROTEIN SEPF"/>
    <property type="match status" value="1"/>
</dbReference>
<dbReference type="Pfam" id="PF04472">
    <property type="entry name" value="SepF"/>
    <property type="match status" value="1"/>
</dbReference>
<name>SEPF_PROMA</name>
<reference key="1">
    <citation type="journal article" date="2003" name="Proc. Natl. Acad. Sci. U.S.A.">
        <title>Genome sequence of the cyanobacterium Prochlorococcus marinus SS120, a nearly minimal oxyphototrophic genome.</title>
        <authorList>
            <person name="Dufresne A."/>
            <person name="Salanoubat M."/>
            <person name="Partensky F."/>
            <person name="Artiguenave F."/>
            <person name="Axmann I.M."/>
            <person name="Barbe V."/>
            <person name="Duprat S."/>
            <person name="Galperin M.Y."/>
            <person name="Koonin E.V."/>
            <person name="Le Gall F."/>
            <person name="Makarova K.S."/>
            <person name="Ostrowski M."/>
            <person name="Oztas S."/>
            <person name="Robert C."/>
            <person name="Rogozin I.B."/>
            <person name="Scanlan D.J."/>
            <person name="Tandeau de Marsac N."/>
            <person name="Weissenbach J."/>
            <person name="Wincker P."/>
            <person name="Wolf Y.I."/>
            <person name="Hess W.R."/>
        </authorList>
    </citation>
    <scope>NUCLEOTIDE SEQUENCE [LARGE SCALE GENOMIC DNA]</scope>
    <source>
        <strain>SARG / CCMP1375 / SS120</strain>
    </source>
</reference>